<sequence length="446" mass="50557">MGYTKAEILKALKGENVKFLRLQITDILGVVKNVEVPESQFEKALDGEIMFDGSSIEGFTRIEESDMLLRPDYNTFVILPDLVEDPKRGRVARLICDVYYPDGRPFEGDPRYVLKRQIERLKKLGFDNLYAGPEPEFFLFLRTPEGLPTTETHDRAGYFDLAPIDKGEEARRDMVNALVAMGFEIEAAHHEVAPGQHEIDFKYADALTTADNIATFKWVVKRIALNHGLHATFLPKPIRGINGSGMHTHLSLFKDGENAFYDPNAEYQLSQTALHFIAGLLEHAAGMVAVTNPLVNSYKRLTPGYEAPTNIAWSASNRSAMIRIPARRGVGTRAELRMPDPSCNPYLALAVMAAAGADGIERKLLPPPPIQRNIYQMTVRERRKHKIRELPGTLREALEALRKDPVIREALGEHVYTHFLQAKQMEWDDYRVTVHQWELDRYLATY</sequence>
<evidence type="ECO:0000250" key="1">
    <source>
        <dbReference type="UniProtKB" id="P0A1P6"/>
    </source>
</evidence>
<evidence type="ECO:0000250" key="2">
    <source>
        <dbReference type="UniProtKB" id="P12425"/>
    </source>
</evidence>
<evidence type="ECO:0000250" key="3">
    <source>
        <dbReference type="UniProtKB" id="P77961"/>
    </source>
</evidence>
<evidence type="ECO:0000250" key="4">
    <source>
        <dbReference type="UniProtKB" id="P9WN39"/>
    </source>
</evidence>
<evidence type="ECO:0000255" key="5">
    <source>
        <dbReference type="PROSITE-ProRule" id="PRU01330"/>
    </source>
</evidence>
<evidence type="ECO:0000255" key="6">
    <source>
        <dbReference type="PROSITE-ProRule" id="PRU01331"/>
    </source>
</evidence>
<evidence type="ECO:0000269" key="7">
    <source>
    </source>
</evidence>
<evidence type="ECO:0000303" key="8">
    <source>
    </source>
</evidence>
<evidence type="ECO:0000305" key="9"/>
<evidence type="ECO:0000312" key="10">
    <source>
        <dbReference type="EMBL" id="BAD71152.1"/>
    </source>
</evidence>
<protein>
    <recommendedName>
        <fullName evidence="8">Glutamine synthetase</fullName>
        <shortName evidence="2">GS</shortName>
        <ecNumber evidence="7">6.3.1.2</ecNumber>
    </recommendedName>
    <alternativeName>
        <fullName evidence="2">Glutamate--ammonia ligase</fullName>
    </alternativeName>
</protein>
<gene>
    <name evidence="10" type="ordered locus">TTHA1329</name>
</gene>
<keyword id="KW-0067">ATP-binding</keyword>
<keyword id="KW-0963">Cytoplasm</keyword>
<keyword id="KW-0436">Ligase</keyword>
<keyword id="KW-0460">Magnesium</keyword>
<keyword id="KW-0479">Metal-binding</keyword>
<keyword id="KW-0547">Nucleotide-binding</keyword>
<keyword id="KW-1185">Reference proteome</keyword>
<accession>Q5SIP0</accession>
<comment type="function">
    <text evidence="7">Catalyzes the ATP-dependent biosynthesis of glutamine from glutamate and ammonia.</text>
</comment>
<comment type="catalytic activity">
    <reaction evidence="7">
        <text>L-glutamate + NH4(+) + ATP = L-glutamine + ADP + phosphate + H(+)</text>
        <dbReference type="Rhea" id="RHEA:16169"/>
        <dbReference type="ChEBI" id="CHEBI:15378"/>
        <dbReference type="ChEBI" id="CHEBI:28938"/>
        <dbReference type="ChEBI" id="CHEBI:29985"/>
        <dbReference type="ChEBI" id="CHEBI:30616"/>
        <dbReference type="ChEBI" id="CHEBI:43474"/>
        <dbReference type="ChEBI" id="CHEBI:58359"/>
        <dbReference type="ChEBI" id="CHEBI:456216"/>
        <dbReference type="EC" id="6.3.1.2"/>
    </reaction>
</comment>
<comment type="cofactor">
    <cofactor evidence="2">
        <name>Mg(2+)</name>
        <dbReference type="ChEBI" id="CHEBI:18420"/>
    </cofactor>
    <text evidence="2">Binds 2 Mg(2+) ions per subunit.</text>
</comment>
<comment type="activity regulation">
    <text evidence="7">Activity increases by approximately two-fold in the presence of GCBP.</text>
</comment>
<comment type="subunit">
    <text evidence="7">Interacts with GCBP (TTHA1554).</text>
</comment>
<comment type="subcellular location">
    <subcellularLocation>
        <location evidence="2">Cytoplasm</location>
    </subcellularLocation>
</comment>
<comment type="similarity">
    <text evidence="9">Belongs to the glutamine synthetase family.</text>
</comment>
<reference key="1">
    <citation type="submission" date="2004-11" db="EMBL/GenBank/DDBJ databases">
        <title>Complete genome sequence of Thermus thermophilus HB8.</title>
        <authorList>
            <person name="Masui R."/>
            <person name="Kurokawa K."/>
            <person name="Nakagawa N."/>
            <person name="Tokunaga F."/>
            <person name="Koyama Y."/>
            <person name="Shibata T."/>
            <person name="Oshima T."/>
            <person name="Yokoyama S."/>
            <person name="Yasunaga T."/>
            <person name="Kuramitsu S."/>
        </authorList>
    </citation>
    <scope>NUCLEOTIDE SEQUENCE [LARGE SCALE GENOMIC DNA]</scope>
    <source>
        <strain>ATCC 27634 / DSM 579 / HB8</strain>
    </source>
</reference>
<reference key="2">
    <citation type="journal article" date="2005" name="Biochim. Biophys. Acta">
        <title>Conserved protein TTHA1554 from Thermus thermophilus HB8 binds to glutamine synthetase and cystathionine beta-lyase.</title>
        <authorList>
            <person name="Arai R."/>
            <person name="Nishimoto M."/>
            <person name="Toyama M."/>
            <person name="Terada T."/>
            <person name="Kuramitsu S."/>
            <person name="Shirouzu M."/>
            <person name="Yokoyama S."/>
        </authorList>
    </citation>
    <scope>FUNCTION</scope>
    <scope>CATALYTIC ACTIVITY</scope>
    <scope>ACTIVITY REGULATION</scope>
    <scope>IDENTIFICATION BY MASS SPECTROMETRY</scope>
    <scope>INTERACTION WITH GCBP</scope>
    <source>
        <strain>ATCC 27634 / DSM 579 / HB8</strain>
    </source>
</reference>
<feature type="chain" id="PRO_0000442990" description="Glutamine synthetase">
    <location>
        <begin position="1"/>
        <end position="446"/>
    </location>
</feature>
<feature type="domain" description="GS beta-grasp" evidence="5">
    <location>
        <begin position="15"/>
        <end position="103"/>
    </location>
</feature>
<feature type="domain" description="GS catalytic" evidence="6">
    <location>
        <begin position="110"/>
        <end position="446"/>
    </location>
</feature>
<feature type="binding site" evidence="2">
    <location>
        <position position="134"/>
    </location>
    <ligand>
        <name>Mg(2+)</name>
        <dbReference type="ChEBI" id="CHEBI:18420"/>
        <label>1</label>
    </ligand>
</feature>
<feature type="binding site" evidence="2">
    <location>
        <position position="136"/>
    </location>
    <ligand>
        <name>Mg(2+)</name>
        <dbReference type="ChEBI" id="CHEBI:18420"/>
        <label>2</label>
    </ligand>
</feature>
<feature type="binding site" evidence="4">
    <location>
        <position position="186"/>
    </location>
    <ligand>
        <name>ATP</name>
        <dbReference type="ChEBI" id="CHEBI:30616"/>
    </ligand>
</feature>
<feature type="binding site" evidence="2">
    <location>
        <position position="191"/>
    </location>
    <ligand>
        <name>Mg(2+)</name>
        <dbReference type="ChEBI" id="CHEBI:18420"/>
        <label>2</label>
    </ligand>
</feature>
<feature type="binding site" evidence="2">
    <location>
        <position position="198"/>
    </location>
    <ligand>
        <name>Mg(2+)</name>
        <dbReference type="ChEBI" id="CHEBI:18420"/>
        <label>2</label>
    </ligand>
</feature>
<feature type="binding site" evidence="4">
    <location>
        <begin position="242"/>
        <end position="243"/>
    </location>
    <ligand>
        <name>L-glutamate</name>
        <dbReference type="ChEBI" id="CHEBI:29985"/>
    </ligand>
</feature>
<feature type="binding site" evidence="2">
    <location>
        <position position="243"/>
    </location>
    <ligand>
        <name>L-glutamate</name>
        <dbReference type="ChEBI" id="CHEBI:29985"/>
    </ligand>
</feature>
<feature type="binding site" evidence="2">
    <location>
        <position position="247"/>
    </location>
    <ligand>
        <name>Mg(2+)</name>
        <dbReference type="ChEBI" id="CHEBI:18420"/>
        <label>1</label>
    </ligand>
</feature>
<feature type="binding site" evidence="3">
    <location>
        <position position="251"/>
    </location>
    <ligand>
        <name>ATP</name>
        <dbReference type="ChEBI" id="CHEBI:30616"/>
    </ligand>
</feature>
<feature type="binding site" evidence="1">
    <location>
        <position position="300"/>
    </location>
    <ligand>
        <name>L-glutamate</name>
        <dbReference type="ChEBI" id="CHEBI:29985"/>
    </ligand>
</feature>
<feature type="binding site" evidence="1">
    <location>
        <position position="306"/>
    </location>
    <ligand>
        <name>L-glutamate</name>
        <dbReference type="ChEBI" id="CHEBI:29985"/>
    </ligand>
</feature>
<feature type="binding site" evidence="4">
    <location>
        <position position="318"/>
    </location>
    <ligand>
        <name>ATP</name>
        <dbReference type="ChEBI" id="CHEBI:30616"/>
    </ligand>
</feature>
<feature type="binding site" evidence="4">
    <location>
        <position position="318"/>
    </location>
    <ligand>
        <name>L-glutamate</name>
        <dbReference type="ChEBI" id="CHEBI:29985"/>
    </ligand>
</feature>
<feature type="binding site" evidence="4">
    <location>
        <position position="323"/>
    </location>
    <ligand>
        <name>ATP</name>
        <dbReference type="ChEBI" id="CHEBI:30616"/>
    </ligand>
</feature>
<feature type="binding site" evidence="2">
    <location>
        <position position="335"/>
    </location>
    <ligand>
        <name>Mg(2+)</name>
        <dbReference type="ChEBI" id="CHEBI:18420"/>
        <label>1</label>
    </ligand>
</feature>
<feature type="binding site" evidence="1">
    <location>
        <position position="337"/>
    </location>
    <ligand>
        <name>L-glutamate</name>
        <dbReference type="ChEBI" id="CHEBI:29985"/>
    </ligand>
</feature>
<organism>
    <name type="scientific">Thermus thermophilus (strain ATCC 27634 / DSM 579 / HB8)</name>
    <dbReference type="NCBI Taxonomy" id="300852"/>
    <lineage>
        <taxon>Bacteria</taxon>
        <taxon>Thermotogati</taxon>
        <taxon>Deinococcota</taxon>
        <taxon>Deinococci</taxon>
        <taxon>Thermales</taxon>
        <taxon>Thermaceae</taxon>
        <taxon>Thermus</taxon>
    </lineage>
</organism>
<dbReference type="EC" id="6.3.1.2" evidence="7"/>
<dbReference type="EMBL" id="AP008226">
    <property type="protein sequence ID" value="BAD71152.1"/>
    <property type="molecule type" value="Genomic_DNA"/>
</dbReference>
<dbReference type="RefSeq" id="YP_144595.1">
    <property type="nucleotide sequence ID" value="NC_006461.1"/>
</dbReference>
<dbReference type="SMR" id="Q5SIP0"/>
<dbReference type="EnsemblBacteria" id="BAD71152">
    <property type="protein sequence ID" value="BAD71152"/>
    <property type="gene ID" value="BAD71152"/>
</dbReference>
<dbReference type="GeneID" id="3168529"/>
<dbReference type="KEGG" id="ttj:TTHA1329"/>
<dbReference type="PATRIC" id="fig|300852.9.peg.1307"/>
<dbReference type="eggNOG" id="COG0174">
    <property type="taxonomic scope" value="Bacteria"/>
</dbReference>
<dbReference type="HOGENOM" id="CLU_017290_1_3_0"/>
<dbReference type="PhylomeDB" id="Q5SIP0"/>
<dbReference type="Proteomes" id="UP000000532">
    <property type="component" value="Chromosome"/>
</dbReference>
<dbReference type="GO" id="GO:0005737">
    <property type="term" value="C:cytoplasm"/>
    <property type="evidence" value="ECO:0007669"/>
    <property type="project" value="UniProtKB-SubCell"/>
</dbReference>
<dbReference type="GO" id="GO:0005524">
    <property type="term" value="F:ATP binding"/>
    <property type="evidence" value="ECO:0007669"/>
    <property type="project" value="UniProtKB-KW"/>
</dbReference>
<dbReference type="GO" id="GO:0004356">
    <property type="term" value="F:glutamine synthetase activity"/>
    <property type="evidence" value="ECO:0007669"/>
    <property type="project" value="UniProtKB-EC"/>
</dbReference>
<dbReference type="GO" id="GO:0046872">
    <property type="term" value="F:metal ion binding"/>
    <property type="evidence" value="ECO:0007669"/>
    <property type="project" value="UniProtKB-KW"/>
</dbReference>
<dbReference type="GO" id="GO:0006542">
    <property type="term" value="P:glutamine biosynthetic process"/>
    <property type="evidence" value="ECO:0007669"/>
    <property type="project" value="InterPro"/>
</dbReference>
<dbReference type="FunFam" id="3.10.20.70:FF:000005">
    <property type="entry name" value="Glutamine synthetase"/>
    <property type="match status" value="1"/>
</dbReference>
<dbReference type="FunFam" id="3.30.590.10:FF:000003">
    <property type="entry name" value="Glutamine synthetase 2"/>
    <property type="match status" value="1"/>
</dbReference>
<dbReference type="Gene3D" id="3.10.20.70">
    <property type="entry name" value="Glutamine synthetase, N-terminal domain"/>
    <property type="match status" value="1"/>
</dbReference>
<dbReference type="Gene3D" id="3.30.590.10">
    <property type="entry name" value="Glutamine synthetase/guanido kinase, catalytic domain"/>
    <property type="match status" value="1"/>
</dbReference>
<dbReference type="InterPro" id="IPR008147">
    <property type="entry name" value="Gln_synt_N"/>
</dbReference>
<dbReference type="InterPro" id="IPR036651">
    <property type="entry name" value="Gln_synt_N_sf"/>
</dbReference>
<dbReference type="InterPro" id="IPR014746">
    <property type="entry name" value="Gln_synth/guanido_kin_cat_dom"/>
</dbReference>
<dbReference type="InterPro" id="IPR008146">
    <property type="entry name" value="Gln_synth_cat_dom"/>
</dbReference>
<dbReference type="InterPro" id="IPR027303">
    <property type="entry name" value="Gln_synth_gly_rich_site"/>
</dbReference>
<dbReference type="InterPro" id="IPR004809">
    <property type="entry name" value="Gln_synth_I"/>
</dbReference>
<dbReference type="InterPro" id="IPR027302">
    <property type="entry name" value="Gln_synth_N_conserv_site"/>
</dbReference>
<dbReference type="NCBIfam" id="TIGR00653">
    <property type="entry name" value="GlnA"/>
    <property type="match status" value="1"/>
</dbReference>
<dbReference type="PANTHER" id="PTHR43785">
    <property type="entry name" value="GAMMA-GLUTAMYLPUTRESCINE SYNTHETASE"/>
    <property type="match status" value="1"/>
</dbReference>
<dbReference type="PANTHER" id="PTHR43785:SF12">
    <property type="entry name" value="TYPE-1 GLUTAMINE SYNTHETASE 2"/>
    <property type="match status" value="1"/>
</dbReference>
<dbReference type="Pfam" id="PF00120">
    <property type="entry name" value="Gln-synt_C"/>
    <property type="match status" value="1"/>
</dbReference>
<dbReference type="Pfam" id="PF03951">
    <property type="entry name" value="Gln-synt_N"/>
    <property type="match status" value="1"/>
</dbReference>
<dbReference type="SMART" id="SM01230">
    <property type="entry name" value="Gln-synt_C"/>
    <property type="match status" value="1"/>
</dbReference>
<dbReference type="SUPFAM" id="SSF54368">
    <property type="entry name" value="Glutamine synthetase, N-terminal domain"/>
    <property type="match status" value="1"/>
</dbReference>
<dbReference type="SUPFAM" id="SSF55931">
    <property type="entry name" value="Glutamine synthetase/guanido kinase"/>
    <property type="match status" value="1"/>
</dbReference>
<dbReference type="PROSITE" id="PS00180">
    <property type="entry name" value="GLNA_1"/>
    <property type="match status" value="1"/>
</dbReference>
<dbReference type="PROSITE" id="PS00181">
    <property type="entry name" value="GLNA_ATP"/>
    <property type="match status" value="1"/>
</dbReference>
<dbReference type="PROSITE" id="PS51986">
    <property type="entry name" value="GS_BETA_GRASP"/>
    <property type="match status" value="1"/>
</dbReference>
<dbReference type="PROSITE" id="PS51987">
    <property type="entry name" value="GS_CATALYTIC"/>
    <property type="match status" value="1"/>
</dbReference>
<name>GLNA_THET8</name>
<proteinExistence type="evidence at protein level"/>